<feature type="chain" id="PRO_1000079353" description="UPF0149 protein PputGB1_5261">
    <location>
        <begin position="1"/>
        <end position="184"/>
    </location>
</feature>
<organism>
    <name type="scientific">Pseudomonas putida (strain GB-1)</name>
    <dbReference type="NCBI Taxonomy" id="76869"/>
    <lineage>
        <taxon>Bacteria</taxon>
        <taxon>Pseudomonadati</taxon>
        <taxon>Pseudomonadota</taxon>
        <taxon>Gammaproteobacteria</taxon>
        <taxon>Pseudomonadales</taxon>
        <taxon>Pseudomonadaceae</taxon>
        <taxon>Pseudomonas</taxon>
    </lineage>
</organism>
<reference key="1">
    <citation type="submission" date="2008-01" db="EMBL/GenBank/DDBJ databases">
        <title>Complete sequence of Pseudomonas putida GB-1.</title>
        <authorList>
            <consortium name="US DOE Joint Genome Institute"/>
            <person name="Copeland A."/>
            <person name="Lucas S."/>
            <person name="Lapidus A."/>
            <person name="Barry K."/>
            <person name="Glavina del Rio T."/>
            <person name="Dalin E."/>
            <person name="Tice H."/>
            <person name="Pitluck S."/>
            <person name="Bruce D."/>
            <person name="Goodwin L."/>
            <person name="Chertkov O."/>
            <person name="Brettin T."/>
            <person name="Detter J.C."/>
            <person name="Han C."/>
            <person name="Kuske C.R."/>
            <person name="Schmutz J."/>
            <person name="Larimer F."/>
            <person name="Land M."/>
            <person name="Hauser L."/>
            <person name="Kyrpides N."/>
            <person name="Kim E."/>
            <person name="McCarthy J.K."/>
            <person name="Richardson P."/>
        </authorList>
    </citation>
    <scope>NUCLEOTIDE SEQUENCE [LARGE SCALE GENOMIC DNA]</scope>
    <source>
        <strain>GB-1</strain>
    </source>
</reference>
<sequence length="184" mass="19482">MPNTQSPYIAFAMLLSSNGHPVTPAELHGLLIGRSCAGAGFDADAWLADAAQLLETEPGDTVRNALIGLQEMVKGELNSDDMAIVLLLPSDDAALSDRATALGQWCQGFITGFGLNAGGKDLSDEAKDVLQDLVAISQVQEALEESEDGESDYMEVMEYLRVAPLLLFSELAKPAAPAPKPSLH</sequence>
<proteinExistence type="inferred from homology"/>
<evidence type="ECO:0000255" key="1">
    <source>
        <dbReference type="HAMAP-Rule" id="MF_00346"/>
    </source>
</evidence>
<comment type="similarity">
    <text evidence="1">Belongs to the UPF0149 family.</text>
</comment>
<protein>
    <recommendedName>
        <fullName evidence="1">UPF0149 protein PputGB1_5261</fullName>
    </recommendedName>
</protein>
<dbReference type="EMBL" id="CP000926">
    <property type="protein sequence ID" value="ABZ01144.1"/>
    <property type="molecule type" value="Genomic_DNA"/>
</dbReference>
<dbReference type="RefSeq" id="WP_012274755.1">
    <property type="nucleotide sequence ID" value="NC_010322.1"/>
</dbReference>
<dbReference type="SMR" id="B0KP86"/>
<dbReference type="KEGG" id="ppg:PputGB1_5261"/>
<dbReference type="eggNOG" id="COG3079">
    <property type="taxonomic scope" value="Bacteria"/>
</dbReference>
<dbReference type="HOGENOM" id="CLU_085336_0_1_6"/>
<dbReference type="Proteomes" id="UP000002157">
    <property type="component" value="Chromosome"/>
</dbReference>
<dbReference type="GO" id="GO:0005829">
    <property type="term" value="C:cytosol"/>
    <property type="evidence" value="ECO:0007669"/>
    <property type="project" value="TreeGrafter"/>
</dbReference>
<dbReference type="Gene3D" id="1.20.120.740">
    <property type="entry name" value="YgfB uncharacterised protein family UPF0149, PF03695"/>
    <property type="match status" value="1"/>
</dbReference>
<dbReference type="HAMAP" id="MF_00346">
    <property type="entry name" value="UPF0149"/>
    <property type="match status" value="1"/>
</dbReference>
<dbReference type="InterPro" id="IPR011978">
    <property type="entry name" value="YgfB-like"/>
</dbReference>
<dbReference type="InterPro" id="IPR036255">
    <property type="entry name" value="YgfB-like_sf"/>
</dbReference>
<dbReference type="NCBIfam" id="NF002562">
    <property type="entry name" value="PRK02166.1"/>
    <property type="match status" value="1"/>
</dbReference>
<dbReference type="PANTHER" id="PTHR37528">
    <property type="entry name" value="UPF0149 PROTEIN YGFB"/>
    <property type="match status" value="1"/>
</dbReference>
<dbReference type="PANTHER" id="PTHR37528:SF1">
    <property type="entry name" value="UPF0149 PROTEIN YGFB"/>
    <property type="match status" value="1"/>
</dbReference>
<dbReference type="Pfam" id="PF03695">
    <property type="entry name" value="UPF0149"/>
    <property type="match status" value="1"/>
</dbReference>
<dbReference type="SUPFAM" id="SSF101327">
    <property type="entry name" value="YgfB-like"/>
    <property type="match status" value="1"/>
</dbReference>
<gene>
    <name type="ordered locus">PputGB1_5261</name>
</gene>
<name>Y5261_PSEPG</name>
<accession>B0KP86</accession>